<organism>
    <name type="scientific">Arabidopsis thaliana</name>
    <name type="common">Mouse-ear cress</name>
    <dbReference type="NCBI Taxonomy" id="3702"/>
    <lineage>
        <taxon>Eukaryota</taxon>
        <taxon>Viridiplantae</taxon>
        <taxon>Streptophyta</taxon>
        <taxon>Embryophyta</taxon>
        <taxon>Tracheophyta</taxon>
        <taxon>Spermatophyta</taxon>
        <taxon>Magnoliopsida</taxon>
        <taxon>eudicotyledons</taxon>
        <taxon>Gunneridae</taxon>
        <taxon>Pentapetalae</taxon>
        <taxon>rosids</taxon>
        <taxon>malvids</taxon>
        <taxon>Brassicales</taxon>
        <taxon>Brassicaceae</taxon>
        <taxon>Camelineae</taxon>
        <taxon>Arabidopsis</taxon>
    </lineage>
</organism>
<name>NACA1_ARATH</name>
<accession>Q9LHG9</accession>
<keyword id="KW-0597">Phosphoprotein</keyword>
<keyword id="KW-0653">Protein transport</keyword>
<keyword id="KW-1185">Reference proteome</keyword>
<keyword id="KW-0813">Transport</keyword>
<dbReference type="EMBL" id="AC069474">
    <property type="protein sequence ID" value="AAG51031.1"/>
    <property type="molecule type" value="Genomic_DNA"/>
</dbReference>
<dbReference type="EMBL" id="AP002047">
    <property type="protein sequence ID" value="BAB03146.1"/>
    <property type="molecule type" value="Genomic_DNA"/>
</dbReference>
<dbReference type="EMBL" id="CP002686">
    <property type="protein sequence ID" value="AEE75192.1"/>
    <property type="molecule type" value="Genomic_DNA"/>
</dbReference>
<dbReference type="EMBL" id="AY048232">
    <property type="protein sequence ID" value="AAK82495.1"/>
    <property type="molecule type" value="mRNA"/>
</dbReference>
<dbReference type="EMBL" id="AY094022">
    <property type="protein sequence ID" value="AAM16178.1"/>
    <property type="molecule type" value="mRNA"/>
</dbReference>
<dbReference type="RefSeq" id="NP_187845.1">
    <property type="nucleotide sequence ID" value="NM_112074.3"/>
</dbReference>
<dbReference type="SMR" id="Q9LHG9"/>
<dbReference type="BioGRID" id="5752">
    <property type="interactions" value="13"/>
</dbReference>
<dbReference type="FunCoup" id="Q9LHG9">
    <property type="interactions" value="3677"/>
</dbReference>
<dbReference type="IntAct" id="Q9LHG9">
    <property type="interactions" value="3"/>
</dbReference>
<dbReference type="STRING" id="3702.Q9LHG9"/>
<dbReference type="iPTMnet" id="Q9LHG9"/>
<dbReference type="MetOSite" id="Q9LHG9"/>
<dbReference type="PaxDb" id="3702-AT3G12390.1"/>
<dbReference type="ProteomicsDB" id="251263"/>
<dbReference type="EnsemblPlants" id="AT3G12390.1">
    <property type="protein sequence ID" value="AT3G12390.1"/>
    <property type="gene ID" value="AT3G12390"/>
</dbReference>
<dbReference type="GeneID" id="820418"/>
<dbReference type="Gramene" id="AT3G12390.1">
    <property type="protein sequence ID" value="AT3G12390.1"/>
    <property type="gene ID" value="AT3G12390"/>
</dbReference>
<dbReference type="KEGG" id="ath:AT3G12390"/>
<dbReference type="Araport" id="AT3G12390"/>
<dbReference type="TAIR" id="AT3G12390"/>
<dbReference type="eggNOG" id="KOG2239">
    <property type="taxonomic scope" value="Eukaryota"/>
</dbReference>
<dbReference type="HOGENOM" id="CLU_057806_3_0_1"/>
<dbReference type="InParanoid" id="Q9LHG9"/>
<dbReference type="OMA" id="SQKMIFA"/>
<dbReference type="OrthoDB" id="3169036at2759"/>
<dbReference type="PhylomeDB" id="Q9LHG9"/>
<dbReference type="CD-CODE" id="4299E36E">
    <property type="entry name" value="Nucleolus"/>
</dbReference>
<dbReference type="PRO" id="PR:Q9LHG9"/>
<dbReference type="Proteomes" id="UP000006548">
    <property type="component" value="Chromosome 3"/>
</dbReference>
<dbReference type="ExpressionAtlas" id="Q9LHG9">
    <property type="expression patterns" value="baseline and differential"/>
</dbReference>
<dbReference type="GO" id="GO:0005829">
    <property type="term" value="C:cytosol"/>
    <property type="evidence" value="ECO:0007005"/>
    <property type="project" value="TAIR"/>
</dbReference>
<dbReference type="GO" id="GO:0022626">
    <property type="term" value="C:cytosolic ribosome"/>
    <property type="evidence" value="ECO:0007005"/>
    <property type="project" value="TAIR"/>
</dbReference>
<dbReference type="GO" id="GO:0005854">
    <property type="term" value="C:nascent polypeptide-associated complex"/>
    <property type="evidence" value="ECO:0007669"/>
    <property type="project" value="InterPro"/>
</dbReference>
<dbReference type="GO" id="GO:0009506">
    <property type="term" value="C:plasmodesma"/>
    <property type="evidence" value="ECO:0007005"/>
    <property type="project" value="TAIR"/>
</dbReference>
<dbReference type="GO" id="GO:0015031">
    <property type="term" value="P:protein transport"/>
    <property type="evidence" value="ECO:0007669"/>
    <property type="project" value="UniProtKB-KW"/>
</dbReference>
<dbReference type="CDD" id="cd22054">
    <property type="entry name" value="NAC_NACA"/>
    <property type="match status" value="1"/>
</dbReference>
<dbReference type="CDD" id="cd14358">
    <property type="entry name" value="UBA_NAC_euk"/>
    <property type="match status" value="1"/>
</dbReference>
<dbReference type="FunFam" id="2.20.70.30:FF:000002">
    <property type="entry name" value="Nascent polypeptide-associated complex (NAC), alpha subunit"/>
    <property type="match status" value="1"/>
</dbReference>
<dbReference type="FunFam" id="1.10.8.10:FF:000006">
    <property type="entry name" value="Putative nascent polypeptide-associated complex subunit alpha"/>
    <property type="match status" value="1"/>
</dbReference>
<dbReference type="Gene3D" id="1.10.8.10">
    <property type="entry name" value="DNA helicase RuvA subunit, C-terminal domain"/>
    <property type="match status" value="1"/>
</dbReference>
<dbReference type="Gene3D" id="2.20.70.30">
    <property type="entry name" value="Nascent polypeptide-associated complex domain"/>
    <property type="match status" value="1"/>
</dbReference>
<dbReference type="InterPro" id="IPR016641">
    <property type="entry name" value="EGD2/NACA0like"/>
</dbReference>
<dbReference type="InterPro" id="IPR044034">
    <property type="entry name" value="NAC-like_UBA"/>
</dbReference>
<dbReference type="InterPro" id="IPR038187">
    <property type="entry name" value="NAC_A/B_dom_sf"/>
</dbReference>
<dbReference type="InterPro" id="IPR002715">
    <property type="entry name" value="Nas_poly-pep-assoc_cplx_dom"/>
</dbReference>
<dbReference type="PANTHER" id="PTHR21713">
    <property type="entry name" value="NASCENT POLYPEPTIDE ASSOCIATED COMPLEX ALPHA SUBUNIT-RELATED"/>
    <property type="match status" value="1"/>
</dbReference>
<dbReference type="Pfam" id="PF01849">
    <property type="entry name" value="NAC"/>
    <property type="match status" value="1"/>
</dbReference>
<dbReference type="Pfam" id="PF19026">
    <property type="entry name" value="UBA_HYPK"/>
    <property type="match status" value="1"/>
</dbReference>
<dbReference type="SMART" id="SM01407">
    <property type="entry name" value="NAC"/>
    <property type="match status" value="1"/>
</dbReference>
<dbReference type="PROSITE" id="PS51151">
    <property type="entry name" value="NAC_AB"/>
    <property type="match status" value="1"/>
</dbReference>
<protein>
    <recommendedName>
        <fullName>Nascent polypeptide-associated complex subunit alpha-like protein 1</fullName>
        <shortName>NAC-alpha-like protein 1</shortName>
    </recommendedName>
    <alternativeName>
        <fullName>Alpha-NAC-like protein 1</fullName>
    </alternativeName>
</protein>
<gene>
    <name type="ordered locus">At3g12390</name>
    <name type="ORF">T2E22.29</name>
</gene>
<evidence type="ECO:0000250" key="1"/>
<evidence type="ECO:0000255" key="2">
    <source>
        <dbReference type="PROSITE-ProRule" id="PRU00507"/>
    </source>
</evidence>
<evidence type="ECO:0000256" key="3">
    <source>
        <dbReference type="SAM" id="MobiDB-lite"/>
    </source>
</evidence>
<evidence type="ECO:0000305" key="4"/>
<evidence type="ECO:0007744" key="5">
    <source>
    </source>
</evidence>
<feature type="chain" id="PRO_0000135587" description="Nascent polypeptide-associated complex subunit alpha-like protein 1">
    <location>
        <begin position="1"/>
        <end position="203"/>
    </location>
</feature>
<feature type="domain" description="NAC-A/B" evidence="2">
    <location>
        <begin position="60"/>
        <end position="125"/>
    </location>
</feature>
<feature type="domain" description="UBA">
    <location>
        <begin position="158"/>
        <end position="203"/>
    </location>
</feature>
<feature type="region of interest" description="Disordered" evidence="3">
    <location>
        <begin position="1"/>
        <end position="71"/>
    </location>
</feature>
<feature type="compositionally biased region" description="Basic and acidic residues" evidence="3">
    <location>
        <begin position="1"/>
        <end position="23"/>
    </location>
</feature>
<feature type="compositionally biased region" description="Acidic residues" evidence="3">
    <location>
        <begin position="24"/>
        <end position="50"/>
    </location>
</feature>
<feature type="modified residue" description="Phosphoserine" evidence="5">
    <location>
        <position position="36"/>
    </location>
</feature>
<sequence length="203" mass="21982">MTTEEKEILAAKLEEQKIDLDKPEVEDDDDNEDDDSDDDDKDDDEADGLDGEAGGKSKQSRSEKKSRKAMLKLGMKPITGVSRVTVKKSKNILFVISKPDVFKSPASDTYVIFGEAKIEDLSSQIQSQAAEQFKAPDLSNVISKGESSSAAVVQDDEEVDEEGVEPKDIELVMTQAGVSRPNAVKALKAADGDIVSAIMELTT</sequence>
<proteinExistence type="evidence at protein level"/>
<reference key="1">
    <citation type="journal article" date="2000" name="Nature">
        <title>Sequence and analysis of chromosome 3 of the plant Arabidopsis thaliana.</title>
        <authorList>
            <person name="Salanoubat M."/>
            <person name="Lemcke K."/>
            <person name="Rieger M."/>
            <person name="Ansorge W."/>
            <person name="Unseld M."/>
            <person name="Fartmann B."/>
            <person name="Valle G."/>
            <person name="Bloecker H."/>
            <person name="Perez-Alonso M."/>
            <person name="Obermaier B."/>
            <person name="Delseny M."/>
            <person name="Boutry M."/>
            <person name="Grivell L.A."/>
            <person name="Mache R."/>
            <person name="Puigdomenech P."/>
            <person name="De Simone V."/>
            <person name="Choisne N."/>
            <person name="Artiguenave F."/>
            <person name="Robert C."/>
            <person name="Brottier P."/>
            <person name="Wincker P."/>
            <person name="Cattolico L."/>
            <person name="Weissenbach J."/>
            <person name="Saurin W."/>
            <person name="Quetier F."/>
            <person name="Schaefer M."/>
            <person name="Mueller-Auer S."/>
            <person name="Gabel C."/>
            <person name="Fuchs M."/>
            <person name="Benes V."/>
            <person name="Wurmbach E."/>
            <person name="Drzonek H."/>
            <person name="Erfle H."/>
            <person name="Jordan N."/>
            <person name="Bangert S."/>
            <person name="Wiedelmann R."/>
            <person name="Kranz H."/>
            <person name="Voss H."/>
            <person name="Holland R."/>
            <person name="Brandt P."/>
            <person name="Nyakatura G."/>
            <person name="Vezzi A."/>
            <person name="D'Angelo M."/>
            <person name="Pallavicini A."/>
            <person name="Toppo S."/>
            <person name="Simionati B."/>
            <person name="Conrad A."/>
            <person name="Hornischer K."/>
            <person name="Kauer G."/>
            <person name="Loehnert T.-H."/>
            <person name="Nordsiek G."/>
            <person name="Reichelt J."/>
            <person name="Scharfe M."/>
            <person name="Schoen O."/>
            <person name="Bargues M."/>
            <person name="Terol J."/>
            <person name="Climent J."/>
            <person name="Navarro P."/>
            <person name="Collado C."/>
            <person name="Perez-Perez A."/>
            <person name="Ottenwaelder B."/>
            <person name="Duchemin D."/>
            <person name="Cooke R."/>
            <person name="Laudie M."/>
            <person name="Berger-Llauro C."/>
            <person name="Purnelle B."/>
            <person name="Masuy D."/>
            <person name="de Haan M."/>
            <person name="Maarse A.C."/>
            <person name="Alcaraz J.-P."/>
            <person name="Cottet A."/>
            <person name="Casacuberta E."/>
            <person name="Monfort A."/>
            <person name="Argiriou A."/>
            <person name="Flores M."/>
            <person name="Liguori R."/>
            <person name="Vitale D."/>
            <person name="Mannhaupt G."/>
            <person name="Haase D."/>
            <person name="Schoof H."/>
            <person name="Rudd S."/>
            <person name="Zaccaria P."/>
            <person name="Mewes H.-W."/>
            <person name="Mayer K.F.X."/>
            <person name="Kaul S."/>
            <person name="Town C.D."/>
            <person name="Koo H.L."/>
            <person name="Tallon L.J."/>
            <person name="Jenkins J."/>
            <person name="Rooney T."/>
            <person name="Rizzo M."/>
            <person name="Walts A."/>
            <person name="Utterback T."/>
            <person name="Fujii C.Y."/>
            <person name="Shea T.P."/>
            <person name="Creasy T.H."/>
            <person name="Haas B."/>
            <person name="Maiti R."/>
            <person name="Wu D."/>
            <person name="Peterson J."/>
            <person name="Van Aken S."/>
            <person name="Pai G."/>
            <person name="Militscher J."/>
            <person name="Sellers P."/>
            <person name="Gill J.E."/>
            <person name="Feldblyum T.V."/>
            <person name="Preuss D."/>
            <person name="Lin X."/>
            <person name="Nierman W.C."/>
            <person name="Salzberg S.L."/>
            <person name="White O."/>
            <person name="Venter J.C."/>
            <person name="Fraser C.M."/>
            <person name="Kaneko T."/>
            <person name="Nakamura Y."/>
            <person name="Sato S."/>
            <person name="Kato T."/>
            <person name="Asamizu E."/>
            <person name="Sasamoto S."/>
            <person name="Kimura T."/>
            <person name="Idesawa K."/>
            <person name="Kawashima K."/>
            <person name="Kishida Y."/>
            <person name="Kiyokawa C."/>
            <person name="Kohara M."/>
            <person name="Matsumoto M."/>
            <person name="Matsuno A."/>
            <person name="Muraki A."/>
            <person name="Nakayama S."/>
            <person name="Nakazaki N."/>
            <person name="Shinpo S."/>
            <person name="Takeuchi C."/>
            <person name="Wada T."/>
            <person name="Watanabe A."/>
            <person name="Yamada M."/>
            <person name="Yasuda M."/>
            <person name="Tabata S."/>
        </authorList>
    </citation>
    <scope>NUCLEOTIDE SEQUENCE [LARGE SCALE GENOMIC DNA]</scope>
    <source>
        <strain>cv. Columbia</strain>
    </source>
</reference>
<reference key="2">
    <citation type="journal article" date="2000" name="DNA Res.">
        <title>Structural analysis of Arabidopsis thaliana chromosome 3. II. Sequence features of the 4,251,695 bp regions covered by 90 P1, TAC and BAC clones.</title>
        <authorList>
            <person name="Kaneko T."/>
            <person name="Katoh T."/>
            <person name="Sato S."/>
            <person name="Nakamura Y."/>
            <person name="Asamizu E."/>
            <person name="Tabata S."/>
        </authorList>
    </citation>
    <scope>NUCLEOTIDE SEQUENCE [LARGE SCALE GENOMIC DNA]</scope>
    <source>
        <strain>cv. Columbia</strain>
    </source>
</reference>
<reference key="3">
    <citation type="journal article" date="2017" name="Plant J.">
        <title>Araport11: a complete reannotation of the Arabidopsis thaliana reference genome.</title>
        <authorList>
            <person name="Cheng C.Y."/>
            <person name="Krishnakumar V."/>
            <person name="Chan A.P."/>
            <person name="Thibaud-Nissen F."/>
            <person name="Schobel S."/>
            <person name="Town C.D."/>
        </authorList>
    </citation>
    <scope>GENOME REANNOTATION</scope>
    <source>
        <strain>cv. Columbia</strain>
    </source>
</reference>
<reference key="4">
    <citation type="journal article" date="2003" name="Science">
        <title>Empirical analysis of transcriptional activity in the Arabidopsis genome.</title>
        <authorList>
            <person name="Yamada K."/>
            <person name="Lim J."/>
            <person name="Dale J.M."/>
            <person name="Chen H."/>
            <person name="Shinn P."/>
            <person name="Palm C.J."/>
            <person name="Southwick A.M."/>
            <person name="Wu H.C."/>
            <person name="Kim C.J."/>
            <person name="Nguyen M."/>
            <person name="Pham P.K."/>
            <person name="Cheuk R.F."/>
            <person name="Karlin-Newmann G."/>
            <person name="Liu S.X."/>
            <person name="Lam B."/>
            <person name="Sakano H."/>
            <person name="Wu T."/>
            <person name="Yu G."/>
            <person name="Miranda M."/>
            <person name="Quach H.L."/>
            <person name="Tripp M."/>
            <person name="Chang C.H."/>
            <person name="Lee J.M."/>
            <person name="Toriumi M.J."/>
            <person name="Chan M.M."/>
            <person name="Tang C.C."/>
            <person name="Onodera C.S."/>
            <person name="Deng J.M."/>
            <person name="Akiyama K."/>
            <person name="Ansari Y."/>
            <person name="Arakawa T."/>
            <person name="Banh J."/>
            <person name="Banno F."/>
            <person name="Bowser L."/>
            <person name="Brooks S.Y."/>
            <person name="Carninci P."/>
            <person name="Chao Q."/>
            <person name="Choy N."/>
            <person name="Enju A."/>
            <person name="Goldsmith A.D."/>
            <person name="Gurjal M."/>
            <person name="Hansen N.F."/>
            <person name="Hayashizaki Y."/>
            <person name="Johnson-Hopson C."/>
            <person name="Hsuan V.W."/>
            <person name="Iida K."/>
            <person name="Karnes M."/>
            <person name="Khan S."/>
            <person name="Koesema E."/>
            <person name="Ishida J."/>
            <person name="Jiang P.X."/>
            <person name="Jones T."/>
            <person name="Kawai J."/>
            <person name="Kamiya A."/>
            <person name="Meyers C."/>
            <person name="Nakajima M."/>
            <person name="Narusaka M."/>
            <person name="Seki M."/>
            <person name="Sakurai T."/>
            <person name="Satou M."/>
            <person name="Tamse R."/>
            <person name="Vaysberg M."/>
            <person name="Wallender E.K."/>
            <person name="Wong C."/>
            <person name="Yamamura Y."/>
            <person name="Yuan S."/>
            <person name="Shinozaki K."/>
            <person name="Davis R.W."/>
            <person name="Theologis A."/>
            <person name="Ecker J.R."/>
        </authorList>
    </citation>
    <scope>NUCLEOTIDE SEQUENCE [LARGE SCALE MRNA]</scope>
    <source>
        <strain>cv. Columbia</strain>
    </source>
</reference>
<reference key="5">
    <citation type="journal article" date="2009" name="Plant Physiol.">
        <title>Large-scale Arabidopsis phosphoproteome profiling reveals novel chloroplast kinase substrates and phosphorylation networks.</title>
        <authorList>
            <person name="Reiland S."/>
            <person name="Messerli G."/>
            <person name="Baerenfaller K."/>
            <person name="Gerrits B."/>
            <person name="Endler A."/>
            <person name="Grossmann J."/>
            <person name="Gruissem W."/>
            <person name="Baginsky S."/>
        </authorList>
    </citation>
    <scope>PHOSPHORYLATION [LARGE SCALE ANALYSIS] AT SER-36</scope>
    <scope>IDENTIFICATION BY MASS SPECTROMETRY [LARGE SCALE ANALYSIS]</scope>
</reference>
<comment type="function">
    <text evidence="1">May promote appropriate targeting of ribosome-nascent polypeptide complexes.</text>
</comment>
<comment type="similarity">
    <text evidence="4">Belongs to the NAC-alpha family.</text>
</comment>